<comment type="function">
    <text evidence="5 6 7 11">Catalytic component of the Usp12-46 deubiquitylase complex (PubMed:37798281). Deubiquitylates the wg/wingless-signaling receptor arr/arrow, which stabilizes the receptor and increases its concentration at the cell surface; this enhances the sensitivity of cells to wg/wingless-signal stimulation (PubMed:37798281). This increases the amplitude and spatial range of the signaling response to the wg/wingless morphogen gradient, facilitating the precise, concentration-dependent regulation of its target genes (PubMed:37798281). Required for wg/wingless-mediated signaling in the wing imaginal disc and for wg/wingless-dependent regulation of adult intestinal stem cell proliferation (PubMed:37798281). Negative regulator of Notch signaling, possibly by regulating lysosomal degradation of N/Notch and affecting cell surface receptor levels; this may be context and cell-type specific function involved in external sensory organ development but not in wing imaginal-disc dorsoventral boundary signaling (Probable) (PubMed:22778262). Protects against HTT/huntingtin-induced polyglutamine expansion-dependent neurodegeneration (PubMed:30266909).</text>
</comment>
<comment type="catalytic activity">
    <reaction evidence="11">
        <text>Thiol-dependent hydrolysis of ester, thioester, amide, peptide and isopeptide bonds formed by the C-terminal Gly of ubiquitin (a 76-residue protein attached to proteins as an intracellular targeting signal).</text>
        <dbReference type="EC" id="3.4.19.12"/>
    </reaction>
</comment>
<comment type="subunit">
    <text evidence="7">Catalytic component of the Usp12-46 deubiquitylase complex consisting of Usp12-46, Wdr20 and Uaf1 (PubMed:37798281). The Usp12-46 deubiquitylase complex associates with arr/arrow; the interaction leads to deubiquitination and stabilization of arr/arrow (PubMed:37798281).</text>
</comment>
<comment type="developmental stage">
    <text evidence="7">Expressed in the larval wing imaginal disc.</text>
</comment>
<comment type="disruption phenotype">
    <text evidence="5 7">Viable but sterile with reduced lifespan (PubMed:37798281). Severe defects in adult intestinal epithelium; increased number of intestinal stem and progenitor cells in the adult midgut (PubMed:37798281). Conditional RNAi-mediated knockdown in the central region of the notum results in notum malformation and disorganized thoracic bristle socket pattern with socket duplications or loss of bristles (PubMed:22778262).</text>
</comment>
<comment type="similarity">
    <text evidence="3">Belongs to the peptidase C19 family.</text>
</comment>
<accession>Q9VCT9</accession>
<dbReference type="EC" id="3.4.19.12" evidence="1 2 11"/>
<dbReference type="EMBL" id="AE014297">
    <property type="protein sequence ID" value="AAF56066.1"/>
    <property type="molecule type" value="Genomic_DNA"/>
</dbReference>
<dbReference type="EMBL" id="BT010235">
    <property type="protein sequence ID" value="AAQ23553.1"/>
    <property type="molecule type" value="mRNA"/>
</dbReference>
<dbReference type="RefSeq" id="NP_651099.1">
    <property type="nucleotide sequence ID" value="NM_142842.3"/>
</dbReference>
<dbReference type="SMR" id="Q9VCT9"/>
<dbReference type="ComplexPortal" id="CPX-9262">
    <property type="entry name" value="USP46 deubiquitinase complex"/>
</dbReference>
<dbReference type="FunCoup" id="Q9VCT9">
    <property type="interactions" value="2031"/>
</dbReference>
<dbReference type="STRING" id="7227.FBpp0083704"/>
<dbReference type="MEROPS" id="C19.A23"/>
<dbReference type="PaxDb" id="7227-FBpp0083704"/>
<dbReference type="DNASU" id="42702"/>
<dbReference type="EnsemblMetazoa" id="FBtr0084311">
    <property type="protein sequence ID" value="FBpp0083704"/>
    <property type="gene ID" value="FBgn0039025"/>
</dbReference>
<dbReference type="GeneID" id="42702"/>
<dbReference type="KEGG" id="dme:Dmel_CG7023"/>
<dbReference type="UCSC" id="CG7023-RB">
    <property type="organism name" value="d. melanogaster"/>
</dbReference>
<dbReference type="AGR" id="FB:FBgn0039025"/>
<dbReference type="CTD" id="42702"/>
<dbReference type="FlyBase" id="FBgn0039025">
    <property type="gene designation" value="Usp12-46"/>
</dbReference>
<dbReference type="VEuPathDB" id="VectorBase:FBgn0039025"/>
<dbReference type="eggNOG" id="KOG1864">
    <property type="taxonomic scope" value="Eukaryota"/>
</dbReference>
<dbReference type="GeneTree" id="ENSGT00940000153284"/>
<dbReference type="HOGENOM" id="CLU_008279_2_0_1"/>
<dbReference type="InParanoid" id="Q9VCT9"/>
<dbReference type="OMA" id="ANFGNTC"/>
<dbReference type="OrthoDB" id="27652at2759"/>
<dbReference type="Reactome" id="R-DME-5689880">
    <property type="pathway name" value="Ub-specific processing proteases"/>
</dbReference>
<dbReference type="BioGRID-ORCS" id="42702">
    <property type="hits" value="0 hits in 3 CRISPR screens"/>
</dbReference>
<dbReference type="Proteomes" id="UP000000803">
    <property type="component" value="Chromosome 3R"/>
</dbReference>
<dbReference type="Bgee" id="FBgn0039025">
    <property type="expression patterns" value="Expressed in adult hindgut (Drosophila) and 88 other cell types or tissues"/>
</dbReference>
<dbReference type="GO" id="GO:0005829">
    <property type="term" value="C:cytosol"/>
    <property type="evidence" value="ECO:0000318"/>
    <property type="project" value="GO_Central"/>
</dbReference>
<dbReference type="GO" id="GO:0005634">
    <property type="term" value="C:nucleus"/>
    <property type="evidence" value="ECO:0000318"/>
    <property type="project" value="GO_Central"/>
</dbReference>
<dbReference type="GO" id="GO:1905368">
    <property type="term" value="C:peptidase complex"/>
    <property type="evidence" value="ECO:0000353"/>
    <property type="project" value="FlyBase"/>
</dbReference>
<dbReference type="GO" id="GO:0004843">
    <property type="term" value="F:cysteine-type deubiquitinase activity"/>
    <property type="evidence" value="ECO:0000250"/>
    <property type="project" value="FlyBase"/>
</dbReference>
<dbReference type="GO" id="GO:0101005">
    <property type="term" value="F:deubiquitinase activity"/>
    <property type="evidence" value="ECO:0000314"/>
    <property type="project" value="FlyBase"/>
</dbReference>
<dbReference type="GO" id="GO:0045746">
    <property type="term" value="P:negative regulation of Notch signaling pathway"/>
    <property type="evidence" value="ECO:0000315"/>
    <property type="project" value="FlyBase"/>
</dbReference>
<dbReference type="GO" id="GO:2000059">
    <property type="term" value="P:negative regulation of ubiquitin-dependent protein catabolic process"/>
    <property type="evidence" value="ECO:0000314"/>
    <property type="project" value="FlyBase"/>
</dbReference>
<dbReference type="GO" id="GO:0090263">
    <property type="term" value="P:positive regulation of canonical Wnt signaling pathway"/>
    <property type="evidence" value="ECO:0000315"/>
    <property type="project" value="FlyBase"/>
</dbReference>
<dbReference type="GO" id="GO:0016579">
    <property type="term" value="P:protein deubiquitination"/>
    <property type="evidence" value="ECO:0000250"/>
    <property type="project" value="FlyBase"/>
</dbReference>
<dbReference type="GO" id="GO:0006508">
    <property type="term" value="P:proteolysis"/>
    <property type="evidence" value="ECO:0007669"/>
    <property type="project" value="UniProtKB-KW"/>
</dbReference>
<dbReference type="GO" id="GO:0031647">
    <property type="term" value="P:regulation of protein stability"/>
    <property type="evidence" value="ECO:0000318"/>
    <property type="project" value="GO_Central"/>
</dbReference>
<dbReference type="CDD" id="cd02663">
    <property type="entry name" value="Peptidase_C19G"/>
    <property type="match status" value="1"/>
</dbReference>
<dbReference type="FunFam" id="3.90.70.10:FF:000112">
    <property type="entry name" value="Ubiquitin carboxyl-terminal hydrolase"/>
    <property type="match status" value="1"/>
</dbReference>
<dbReference type="Gene3D" id="3.90.70.10">
    <property type="entry name" value="Cysteine proteinases"/>
    <property type="match status" value="1"/>
</dbReference>
<dbReference type="InterPro" id="IPR038765">
    <property type="entry name" value="Papain-like_cys_pep_sf"/>
</dbReference>
<dbReference type="InterPro" id="IPR050164">
    <property type="entry name" value="Peptidase_C19"/>
</dbReference>
<dbReference type="InterPro" id="IPR001394">
    <property type="entry name" value="Peptidase_C19_UCH"/>
</dbReference>
<dbReference type="InterPro" id="IPR018200">
    <property type="entry name" value="USP_CS"/>
</dbReference>
<dbReference type="InterPro" id="IPR028889">
    <property type="entry name" value="USP_dom"/>
</dbReference>
<dbReference type="PANTHER" id="PTHR24006:SF733">
    <property type="entry name" value="RE52890P"/>
    <property type="match status" value="1"/>
</dbReference>
<dbReference type="PANTHER" id="PTHR24006">
    <property type="entry name" value="UBIQUITIN CARBOXYL-TERMINAL HYDROLASE"/>
    <property type="match status" value="1"/>
</dbReference>
<dbReference type="Pfam" id="PF00443">
    <property type="entry name" value="UCH"/>
    <property type="match status" value="1"/>
</dbReference>
<dbReference type="SUPFAM" id="SSF54001">
    <property type="entry name" value="Cysteine proteinases"/>
    <property type="match status" value="1"/>
</dbReference>
<dbReference type="PROSITE" id="PS00973">
    <property type="entry name" value="USP_2"/>
    <property type="match status" value="1"/>
</dbReference>
<dbReference type="PROSITE" id="PS50235">
    <property type="entry name" value="USP_3"/>
    <property type="match status" value="1"/>
</dbReference>
<feature type="chain" id="PRO_0000461425" description="Ubiquitin carboxyl-terminal hydrolase 12/46 homolog">
    <location>
        <begin position="1"/>
        <end position="424"/>
    </location>
</feature>
<feature type="domain" description="USP" evidence="3">
    <location>
        <begin position="24"/>
        <end position="421"/>
    </location>
</feature>
<feature type="region of interest" description="Disordered" evidence="4">
    <location>
        <begin position="131"/>
        <end position="189"/>
    </location>
</feature>
<feature type="compositionally biased region" description="Polar residues" evidence="4">
    <location>
        <begin position="133"/>
        <end position="144"/>
    </location>
</feature>
<feature type="compositionally biased region" description="Low complexity" evidence="4">
    <location>
        <begin position="145"/>
        <end position="189"/>
    </location>
</feature>
<feature type="active site" description="Nucleophile" evidence="3">
    <location>
        <position position="33"/>
    </location>
</feature>
<feature type="active site" description="Proton acceptor" evidence="3">
    <location>
        <position position="369"/>
    </location>
</feature>
<keyword id="KW-0378">Hydrolase</keyword>
<keyword id="KW-0645">Protease</keyword>
<keyword id="KW-1185">Reference proteome</keyword>
<organism evidence="15">
    <name type="scientific">Drosophila melanogaster</name>
    <name type="common">Fruit fly</name>
    <dbReference type="NCBI Taxonomy" id="7227"/>
    <lineage>
        <taxon>Eukaryota</taxon>
        <taxon>Metazoa</taxon>
        <taxon>Ecdysozoa</taxon>
        <taxon>Arthropoda</taxon>
        <taxon>Hexapoda</taxon>
        <taxon>Insecta</taxon>
        <taxon>Pterygota</taxon>
        <taxon>Neoptera</taxon>
        <taxon>Endopterygota</taxon>
        <taxon>Diptera</taxon>
        <taxon>Brachycera</taxon>
        <taxon>Muscomorpha</taxon>
        <taxon>Ephydroidea</taxon>
        <taxon>Drosophilidae</taxon>
        <taxon>Drosophila</taxon>
        <taxon>Sophophora</taxon>
    </lineage>
</organism>
<sequence length="424" mass="47271">MGANVSQLEREIGSDLFPPNEHYFGLVNFGNTCYSNSVLQALYFCKPFREKVLEYKAKNKRPKETLLSCLADLFYSIATQKKKVGSIAPKKFITRLRKEKEEFDNYMQQDAHEFLNFLINHINEIILAERNAGPSNGNPKATNQGGSTSAMASSIASKSSSTSNSNSNSNSTTNSNGNSSNSTGSLNANTSVLDASGSLTATTTPIISGNGTGTNGANSEPTWVHEIFQGILTSETRCLNCETVSSKDENFFDLQVDVDQNTSITHCLRCFSNTETLCSDNKFKCDNCCSYQEAQKRMRVKKLPMILALHLKRFKYMEQFNRHIKVSHRVVFPLELRLFNTSDDAVNPDRLYDLTAVVIHCGSGPNRGHYISIVKSHGLWLLFDDDMVDKIEASTIEDFYGLTSDIHKSSETGYILFYQSRDCA</sequence>
<gene>
    <name evidence="14" type="primary">Usp12-46</name>
    <name evidence="12" type="synonym">Usp12</name>
    <name evidence="8 12" type="synonym">Usp12/46</name>
    <name evidence="9" type="synonym">Usp46</name>
    <name evidence="14" type="ORF">CG7023</name>
</gene>
<evidence type="ECO:0000250" key="1">
    <source>
        <dbReference type="UniProtKB" id="O75317"/>
    </source>
</evidence>
<evidence type="ECO:0000250" key="2">
    <source>
        <dbReference type="UniProtKB" id="P62068"/>
    </source>
</evidence>
<evidence type="ECO:0000255" key="3">
    <source>
        <dbReference type="PROSITE-ProRule" id="PRU01035"/>
    </source>
</evidence>
<evidence type="ECO:0000256" key="4">
    <source>
        <dbReference type="SAM" id="MobiDB-lite"/>
    </source>
</evidence>
<evidence type="ECO:0000269" key="5">
    <source>
    </source>
</evidence>
<evidence type="ECO:0000269" key="6">
    <source>
    </source>
</evidence>
<evidence type="ECO:0000269" key="7">
    <source>
    </source>
</evidence>
<evidence type="ECO:0000303" key="8">
    <source>
    </source>
</evidence>
<evidence type="ECO:0000303" key="9">
    <source>
    </source>
</evidence>
<evidence type="ECO:0000305" key="10"/>
<evidence type="ECO:0000305" key="11">
    <source>
    </source>
</evidence>
<evidence type="ECO:0000312" key="12">
    <source>
        <dbReference type="EMBL" id="AAF56066.1"/>
    </source>
</evidence>
<evidence type="ECO:0000312" key="13">
    <source>
        <dbReference type="EMBL" id="AAQ23553.1"/>
    </source>
</evidence>
<evidence type="ECO:0000312" key="14">
    <source>
        <dbReference type="FlyBase" id="FBgn0039025"/>
    </source>
</evidence>
<evidence type="ECO:0000312" key="15">
    <source>
        <dbReference type="Proteomes" id="UP000000803"/>
    </source>
</evidence>
<protein>
    <recommendedName>
        <fullName evidence="10">Ubiquitin carboxyl-terminal hydrolase 12/46 homolog</fullName>
        <ecNumber evidence="1 2 11">3.4.19.12</ecNumber>
    </recommendedName>
    <alternativeName>
        <fullName evidence="14">Ubiquitin-specific protease 12/46</fullName>
    </alternativeName>
</protein>
<name>UBP12_DROME</name>
<proteinExistence type="evidence at protein level"/>
<reference evidence="15" key="1">
    <citation type="journal article" date="2000" name="Science">
        <title>The genome sequence of Drosophila melanogaster.</title>
        <authorList>
            <person name="Adams M.D."/>
            <person name="Celniker S.E."/>
            <person name="Holt R.A."/>
            <person name="Evans C.A."/>
            <person name="Gocayne J.D."/>
            <person name="Amanatides P.G."/>
            <person name="Scherer S.E."/>
            <person name="Li P.W."/>
            <person name="Hoskins R.A."/>
            <person name="Galle R.F."/>
            <person name="George R.A."/>
            <person name="Lewis S.E."/>
            <person name="Richards S."/>
            <person name="Ashburner M."/>
            <person name="Henderson S.N."/>
            <person name="Sutton G.G."/>
            <person name="Wortman J.R."/>
            <person name="Yandell M.D."/>
            <person name="Zhang Q."/>
            <person name="Chen L.X."/>
            <person name="Brandon R.C."/>
            <person name="Rogers Y.-H.C."/>
            <person name="Blazej R.G."/>
            <person name="Champe M."/>
            <person name="Pfeiffer B.D."/>
            <person name="Wan K.H."/>
            <person name="Doyle C."/>
            <person name="Baxter E.G."/>
            <person name="Helt G."/>
            <person name="Nelson C.R."/>
            <person name="Miklos G.L.G."/>
            <person name="Abril J.F."/>
            <person name="Agbayani A."/>
            <person name="An H.-J."/>
            <person name="Andrews-Pfannkoch C."/>
            <person name="Baldwin D."/>
            <person name="Ballew R.M."/>
            <person name="Basu A."/>
            <person name="Baxendale J."/>
            <person name="Bayraktaroglu L."/>
            <person name="Beasley E.M."/>
            <person name="Beeson K.Y."/>
            <person name="Benos P.V."/>
            <person name="Berman B.P."/>
            <person name="Bhandari D."/>
            <person name="Bolshakov S."/>
            <person name="Borkova D."/>
            <person name="Botchan M.R."/>
            <person name="Bouck J."/>
            <person name="Brokstein P."/>
            <person name="Brottier P."/>
            <person name="Burtis K.C."/>
            <person name="Busam D.A."/>
            <person name="Butler H."/>
            <person name="Cadieu E."/>
            <person name="Center A."/>
            <person name="Chandra I."/>
            <person name="Cherry J.M."/>
            <person name="Cawley S."/>
            <person name="Dahlke C."/>
            <person name="Davenport L.B."/>
            <person name="Davies P."/>
            <person name="de Pablos B."/>
            <person name="Delcher A."/>
            <person name="Deng Z."/>
            <person name="Mays A.D."/>
            <person name="Dew I."/>
            <person name="Dietz S.M."/>
            <person name="Dodson K."/>
            <person name="Doup L.E."/>
            <person name="Downes M."/>
            <person name="Dugan-Rocha S."/>
            <person name="Dunkov B.C."/>
            <person name="Dunn P."/>
            <person name="Durbin K.J."/>
            <person name="Evangelista C.C."/>
            <person name="Ferraz C."/>
            <person name="Ferriera S."/>
            <person name="Fleischmann W."/>
            <person name="Fosler C."/>
            <person name="Gabrielian A.E."/>
            <person name="Garg N.S."/>
            <person name="Gelbart W.M."/>
            <person name="Glasser K."/>
            <person name="Glodek A."/>
            <person name="Gong F."/>
            <person name="Gorrell J.H."/>
            <person name="Gu Z."/>
            <person name="Guan P."/>
            <person name="Harris M."/>
            <person name="Harris N.L."/>
            <person name="Harvey D.A."/>
            <person name="Heiman T.J."/>
            <person name="Hernandez J.R."/>
            <person name="Houck J."/>
            <person name="Hostin D."/>
            <person name="Houston K.A."/>
            <person name="Howland T.J."/>
            <person name="Wei M.-H."/>
            <person name="Ibegwam C."/>
            <person name="Jalali M."/>
            <person name="Kalush F."/>
            <person name="Karpen G.H."/>
            <person name="Ke Z."/>
            <person name="Kennison J.A."/>
            <person name="Ketchum K.A."/>
            <person name="Kimmel B.E."/>
            <person name="Kodira C.D."/>
            <person name="Kraft C.L."/>
            <person name="Kravitz S."/>
            <person name="Kulp D."/>
            <person name="Lai Z."/>
            <person name="Lasko P."/>
            <person name="Lei Y."/>
            <person name="Levitsky A.A."/>
            <person name="Li J.H."/>
            <person name="Li Z."/>
            <person name="Liang Y."/>
            <person name="Lin X."/>
            <person name="Liu X."/>
            <person name="Mattei B."/>
            <person name="McIntosh T.C."/>
            <person name="McLeod M.P."/>
            <person name="McPherson D."/>
            <person name="Merkulov G."/>
            <person name="Milshina N.V."/>
            <person name="Mobarry C."/>
            <person name="Morris J."/>
            <person name="Moshrefi A."/>
            <person name="Mount S.M."/>
            <person name="Moy M."/>
            <person name="Murphy B."/>
            <person name="Murphy L."/>
            <person name="Muzny D.M."/>
            <person name="Nelson D.L."/>
            <person name="Nelson D.R."/>
            <person name="Nelson K.A."/>
            <person name="Nixon K."/>
            <person name="Nusskern D.R."/>
            <person name="Pacleb J.M."/>
            <person name="Palazzolo M."/>
            <person name="Pittman G.S."/>
            <person name="Pan S."/>
            <person name="Pollard J."/>
            <person name="Puri V."/>
            <person name="Reese M.G."/>
            <person name="Reinert K."/>
            <person name="Remington K."/>
            <person name="Saunders R.D.C."/>
            <person name="Scheeler F."/>
            <person name="Shen H."/>
            <person name="Shue B.C."/>
            <person name="Siden-Kiamos I."/>
            <person name="Simpson M."/>
            <person name="Skupski M.P."/>
            <person name="Smith T.J."/>
            <person name="Spier E."/>
            <person name="Spradling A.C."/>
            <person name="Stapleton M."/>
            <person name="Strong R."/>
            <person name="Sun E."/>
            <person name="Svirskas R."/>
            <person name="Tector C."/>
            <person name="Turner R."/>
            <person name="Venter E."/>
            <person name="Wang A.H."/>
            <person name="Wang X."/>
            <person name="Wang Z.-Y."/>
            <person name="Wassarman D.A."/>
            <person name="Weinstock G.M."/>
            <person name="Weissenbach J."/>
            <person name="Williams S.M."/>
            <person name="Woodage T."/>
            <person name="Worley K.C."/>
            <person name="Wu D."/>
            <person name="Yang S."/>
            <person name="Yao Q.A."/>
            <person name="Ye J."/>
            <person name="Yeh R.-F."/>
            <person name="Zaveri J.S."/>
            <person name="Zhan M."/>
            <person name="Zhang G."/>
            <person name="Zhao Q."/>
            <person name="Zheng L."/>
            <person name="Zheng X.H."/>
            <person name="Zhong F.N."/>
            <person name="Zhong W."/>
            <person name="Zhou X."/>
            <person name="Zhu S.C."/>
            <person name="Zhu X."/>
            <person name="Smith H.O."/>
            <person name="Gibbs R.A."/>
            <person name="Myers E.W."/>
            <person name="Rubin G.M."/>
            <person name="Venter J.C."/>
        </authorList>
    </citation>
    <scope>NUCLEOTIDE SEQUENCE [LARGE SCALE GENOMIC DNA]</scope>
    <source>
        <strain evidence="15">Berkeley</strain>
    </source>
</reference>
<reference evidence="15" key="2">
    <citation type="journal article" date="2002" name="Genome Biol.">
        <title>Annotation of the Drosophila melanogaster euchromatic genome: a systematic review.</title>
        <authorList>
            <person name="Misra S."/>
            <person name="Crosby M.A."/>
            <person name="Mungall C.J."/>
            <person name="Matthews B.B."/>
            <person name="Campbell K.S."/>
            <person name="Hradecky P."/>
            <person name="Huang Y."/>
            <person name="Kaminker J.S."/>
            <person name="Millburn G.H."/>
            <person name="Prochnik S.E."/>
            <person name="Smith C.D."/>
            <person name="Tupy J.L."/>
            <person name="Whitfield E.J."/>
            <person name="Bayraktaroglu L."/>
            <person name="Berman B.P."/>
            <person name="Bettencourt B.R."/>
            <person name="Celniker S.E."/>
            <person name="de Grey A.D.N.J."/>
            <person name="Drysdale R.A."/>
            <person name="Harris N.L."/>
            <person name="Richter J."/>
            <person name="Russo S."/>
            <person name="Schroeder A.J."/>
            <person name="Shu S.Q."/>
            <person name="Stapleton M."/>
            <person name="Yamada C."/>
            <person name="Ashburner M."/>
            <person name="Gelbart W.M."/>
            <person name="Rubin G.M."/>
            <person name="Lewis S.E."/>
        </authorList>
    </citation>
    <scope>GENOME REANNOTATION</scope>
    <source>
        <strain evidence="15">Berkeley</strain>
    </source>
</reference>
<reference evidence="13" key="3">
    <citation type="submission" date="2003-08" db="EMBL/GenBank/DDBJ databases">
        <authorList>
            <person name="Stapleton M."/>
            <person name="Brokstein P."/>
            <person name="Hong L."/>
            <person name="Agbayani A."/>
            <person name="Carlson J."/>
            <person name="Champe M."/>
            <person name="Chavez C."/>
            <person name="Dorsett V."/>
            <person name="Dresnek D."/>
            <person name="Farfan D."/>
            <person name="Frise E."/>
            <person name="George R."/>
            <person name="Gonzalez M."/>
            <person name="Guarin H."/>
            <person name="Kronmiller B."/>
            <person name="Li P."/>
            <person name="Liao G."/>
            <person name="Miranda A."/>
            <person name="Mungall C.J."/>
            <person name="Nunoo J."/>
            <person name="Pacleb J."/>
            <person name="Paragas V."/>
            <person name="Park S."/>
            <person name="Patel S."/>
            <person name="Phouanenavong S."/>
            <person name="Wan K."/>
            <person name="Yu C."/>
            <person name="Lewis S.E."/>
            <person name="Rubin G.M."/>
            <person name="Celniker S."/>
        </authorList>
    </citation>
    <scope>NUCLEOTIDE SEQUENCE [LARGE SCALE MRNA]</scope>
    <source>
        <strain evidence="13">Berkeley</strain>
        <tissue evidence="13">Embryo</tissue>
    </source>
</reference>
<reference key="4">
    <citation type="journal article" date="2012" name="J. Biol. Chem.">
        <title>The ubiquitin-specific protease 12 (USP12) is a negative regulator of notch signaling acting on notch receptor trafficking toward degradation.</title>
        <authorList>
            <person name="Moretti J."/>
            <person name="Chastagner P."/>
            <person name="Liang C.C."/>
            <person name="Cohn M.A."/>
            <person name="Israel A."/>
            <person name="Brou C."/>
        </authorList>
    </citation>
    <scope>FUNCTION</scope>
    <scope>DISRUPTION PHENOTYPE</scope>
</reference>
<reference key="5">
    <citation type="journal article" date="2018" name="Nat. Commun.">
        <title>Deubiquitinase Usp12 functions noncatalytically to induce autophagy and confer neuroprotection in models of Huntington's disease.</title>
        <authorList>
            <person name="Aron R."/>
            <person name="Pellegrini P."/>
            <person name="Green E.W."/>
            <person name="Maddison D.C."/>
            <person name="Opoku-Nsiah K."/>
            <person name="Oliveira A.O."/>
            <person name="Wong J.S."/>
            <person name="Daub A.C."/>
            <person name="Giorgini F."/>
            <person name="Muchowski P."/>
            <person name="Finkbeiner S."/>
        </authorList>
    </citation>
    <scope>FUNCTION</scope>
</reference>
<reference key="6">
    <citation type="journal article" date="2023" name="Nat. Commun.">
        <title>The USP46 deubiquitylase complex increases Wingless/Wnt signaling strength by stabilizing Arrow/LRP6.</title>
        <authorList>
            <person name="Spencer Z.T."/>
            <person name="Ng V.H."/>
            <person name="Benchabane H."/>
            <person name="Siddiqui G.S."/>
            <person name="Duwadi D."/>
            <person name="Maines B."/>
            <person name="Bryant J.M."/>
            <person name="Schwarzkopf A."/>
            <person name="Yuan K."/>
            <person name="Kassel S.N."/>
            <person name="Mishra A."/>
            <person name="Pimentel A."/>
            <person name="Lebensohn A.M."/>
            <person name="Rohatgi R."/>
            <person name="Gerber S.A."/>
            <person name="Robbins D.J."/>
            <person name="Lee E."/>
            <person name="Ahmed Y."/>
        </authorList>
    </citation>
    <scope>FUNCTION</scope>
    <scope>CATALYTIC ACTIVITY</scope>
    <scope>IDENTIFICATION IN THE USP46 COMPLEX</scope>
    <scope>INTERACTION WITH ARR</scope>
    <scope>DEVELOPMENTAL STAGE</scope>
    <scope>DISRUPTION PHENOTYPE</scope>
</reference>